<comment type="subcellular location">
    <subcellularLocation>
        <location evidence="2">Membrane</location>
        <topology evidence="2">Multi-pass membrane protein</topology>
    </subcellularLocation>
</comment>
<comment type="miscellaneous">
    <text evidence="2">Partially overlaps ECM8.</text>
</comment>
<comment type="caution">
    <text evidence="3">Product of a dubious gene prediction unlikely to encode a functional protein. Because of that it is not part of the S.cerevisiae S288c complete/reference proteome set.</text>
</comment>
<keyword id="KW-0472">Membrane</keyword>
<keyword id="KW-0812">Transmembrane</keyword>
<keyword id="KW-1133">Transmembrane helix</keyword>
<dbReference type="EMBL" id="X76294">
    <property type="status" value="NOT_ANNOTATED_CDS"/>
    <property type="molecule type" value="Genomic_DNA"/>
</dbReference>
<dbReference type="EMBL" id="Z35945">
    <property type="status" value="NOT_ANNOTATED_CDS"/>
    <property type="molecule type" value="Genomic_DNA"/>
</dbReference>
<dbReference type="EMBL" id="Z35946">
    <property type="status" value="NOT_ANNOTATED_CDS"/>
    <property type="molecule type" value="Genomic_DNA"/>
</dbReference>
<dbReference type="SMR" id="P0C5L2"/>
<dbReference type="PaxDb" id="4932-YBR076C-A"/>
<dbReference type="EnsemblFungi" id="YBR076C-A_mRNA">
    <property type="protein sequence ID" value="YBR076C-A"/>
    <property type="gene ID" value="YBR076C-A"/>
</dbReference>
<dbReference type="AGR" id="SGD:S000028533"/>
<dbReference type="SGD" id="S000028533">
    <property type="gene designation" value="YBR076C-A"/>
</dbReference>
<dbReference type="HOGENOM" id="CLU_2470795_0_0_1"/>
<dbReference type="GO" id="GO:0016020">
    <property type="term" value="C:membrane"/>
    <property type="evidence" value="ECO:0007669"/>
    <property type="project" value="UniProtKB-SubCell"/>
</dbReference>
<feature type="chain" id="PRO_0000309010" description="Putative uncharacterized protein YBR076C-A">
    <location>
        <begin position="1"/>
        <end position="88"/>
    </location>
</feature>
<feature type="transmembrane region" description="Helical" evidence="1">
    <location>
        <begin position="8"/>
        <end position="28"/>
    </location>
</feature>
<feature type="transmembrane region" description="Helical" evidence="1">
    <location>
        <begin position="45"/>
        <end position="65"/>
    </location>
</feature>
<proteinExistence type="uncertain"/>
<protein>
    <recommendedName>
        <fullName>Putative uncharacterized protein YBR076C-A</fullName>
    </recommendedName>
</protein>
<evidence type="ECO:0000255" key="1"/>
<evidence type="ECO:0000305" key="2"/>
<evidence type="ECO:0000305" key="3">
    <source>
    </source>
</evidence>
<sequence length="88" mass="10625">MHVHKGLIFLSFFSPIYLSLLLNGSIFFFYYAQRALHDSFFFPNELLRCQICLCSLFWMVTVINLKRFFARMVNISIYQPSRNRLVRY</sequence>
<organism>
    <name type="scientific">Saccharomyces cerevisiae (strain ATCC 204508 / S288c)</name>
    <name type="common">Baker's yeast</name>
    <dbReference type="NCBI Taxonomy" id="559292"/>
    <lineage>
        <taxon>Eukaryota</taxon>
        <taxon>Fungi</taxon>
        <taxon>Dikarya</taxon>
        <taxon>Ascomycota</taxon>
        <taxon>Saccharomycotina</taxon>
        <taxon>Saccharomycetes</taxon>
        <taxon>Saccharomycetales</taxon>
        <taxon>Saccharomycetaceae</taxon>
        <taxon>Saccharomyces</taxon>
    </lineage>
</organism>
<gene>
    <name type="ordered locus">YBR076C-A</name>
    <name type="ORF">smORF46</name>
</gene>
<accession>P0C5L2</accession>
<name>YB076_YEAST</name>
<reference key="1">
    <citation type="journal article" date="1994" name="Yeast">
        <title>Sequence analysis of a 31 kb DNA fragment from the right arm of Saccharomyces cerevisiae chromosome II.</title>
        <authorList>
            <person name="van der Aart Q.J.M."/>
            <person name="Barthe C."/>
            <person name="Doignon F."/>
            <person name="Aigle M."/>
            <person name="Crouzet M."/>
            <person name="Steensma H.Y."/>
        </authorList>
    </citation>
    <scope>NUCLEOTIDE SEQUENCE [GENOMIC DNA]</scope>
    <source>
        <strain>ATCC 204508 / S288c</strain>
    </source>
</reference>
<reference key="2">
    <citation type="journal article" date="1994" name="EMBO J.">
        <title>Complete DNA sequence of yeast chromosome II.</title>
        <authorList>
            <person name="Feldmann H."/>
            <person name="Aigle M."/>
            <person name="Aljinovic G."/>
            <person name="Andre B."/>
            <person name="Baclet M.C."/>
            <person name="Barthe C."/>
            <person name="Baur A."/>
            <person name="Becam A.-M."/>
            <person name="Biteau N."/>
            <person name="Boles E."/>
            <person name="Brandt T."/>
            <person name="Brendel M."/>
            <person name="Brueckner M."/>
            <person name="Bussereau F."/>
            <person name="Christiansen C."/>
            <person name="Contreras R."/>
            <person name="Crouzet M."/>
            <person name="Cziepluch C."/>
            <person name="Demolis N."/>
            <person name="Delaveau T."/>
            <person name="Doignon F."/>
            <person name="Domdey H."/>
            <person name="Duesterhus S."/>
            <person name="Dubois E."/>
            <person name="Dujon B."/>
            <person name="El Bakkoury M."/>
            <person name="Entian K.-D."/>
            <person name="Feuermann M."/>
            <person name="Fiers W."/>
            <person name="Fobo G.M."/>
            <person name="Fritz C."/>
            <person name="Gassenhuber J."/>
            <person name="Glansdorff N."/>
            <person name="Goffeau A."/>
            <person name="Grivell L.A."/>
            <person name="de Haan M."/>
            <person name="Hein C."/>
            <person name="Herbert C.J."/>
            <person name="Hollenberg C.P."/>
            <person name="Holmstroem K."/>
            <person name="Jacq C."/>
            <person name="Jacquet M."/>
            <person name="Jauniaux J.-C."/>
            <person name="Jonniaux J.-L."/>
            <person name="Kallesoee T."/>
            <person name="Kiesau P."/>
            <person name="Kirchrath L."/>
            <person name="Koetter P."/>
            <person name="Korol S."/>
            <person name="Liebl S."/>
            <person name="Logghe M."/>
            <person name="Lohan A.J.E."/>
            <person name="Louis E.J."/>
            <person name="Li Z.Y."/>
            <person name="Maat M.J."/>
            <person name="Mallet L."/>
            <person name="Mannhaupt G."/>
            <person name="Messenguy F."/>
            <person name="Miosga T."/>
            <person name="Molemans F."/>
            <person name="Mueller S."/>
            <person name="Nasr F."/>
            <person name="Obermaier B."/>
            <person name="Perea J."/>
            <person name="Pierard A."/>
            <person name="Piravandi E."/>
            <person name="Pohl F.M."/>
            <person name="Pohl T.M."/>
            <person name="Potier S."/>
            <person name="Proft M."/>
            <person name="Purnelle B."/>
            <person name="Ramezani Rad M."/>
            <person name="Rieger M."/>
            <person name="Rose M."/>
            <person name="Schaaff-Gerstenschlaeger I."/>
            <person name="Scherens B."/>
            <person name="Schwarzlose C."/>
            <person name="Skala J."/>
            <person name="Slonimski P.P."/>
            <person name="Smits P.H.M."/>
            <person name="Souciet J.-L."/>
            <person name="Steensma H.Y."/>
            <person name="Stucka R."/>
            <person name="Urrestarazu L.A."/>
            <person name="van der Aart Q.J.M."/>
            <person name="Van Dyck L."/>
            <person name="Vassarotti A."/>
            <person name="Vetter I."/>
            <person name="Vierendeels F."/>
            <person name="Vissers S."/>
            <person name="Wagner G."/>
            <person name="de Wergifosse P."/>
            <person name="Wolfe K.H."/>
            <person name="Zagulski M."/>
            <person name="Zimmermann F.K."/>
            <person name="Mewes H.-W."/>
            <person name="Kleine K."/>
        </authorList>
    </citation>
    <scope>NUCLEOTIDE SEQUENCE [LARGE SCALE GENOMIC DNA]</scope>
    <source>
        <strain>ATCC 204508 / S288c</strain>
    </source>
</reference>
<reference key="3">
    <citation type="journal article" date="2014" name="G3 (Bethesda)">
        <title>The reference genome sequence of Saccharomyces cerevisiae: Then and now.</title>
        <authorList>
            <person name="Engel S.R."/>
            <person name="Dietrich F.S."/>
            <person name="Fisk D.G."/>
            <person name="Binkley G."/>
            <person name="Balakrishnan R."/>
            <person name="Costanzo M.C."/>
            <person name="Dwight S.S."/>
            <person name="Hitz B.C."/>
            <person name="Karra K."/>
            <person name="Nash R.S."/>
            <person name="Weng S."/>
            <person name="Wong E.D."/>
            <person name="Lloyd P."/>
            <person name="Skrzypek M.S."/>
            <person name="Miyasato S.R."/>
            <person name="Simison M."/>
            <person name="Cherry J.M."/>
        </authorList>
    </citation>
    <scope>GENOME REANNOTATION</scope>
    <source>
        <strain>ATCC 204508 / S288c</strain>
    </source>
</reference>
<reference key="4">
    <citation type="journal article" date="2003" name="Genome Res.">
        <title>Systematic discovery of new genes in the Saccharomyces cerevisiae genome.</title>
        <authorList>
            <person name="Kessler M.M."/>
            <person name="Zeng Q."/>
            <person name="Hogan S."/>
            <person name="Cook R."/>
            <person name="Morales A.J."/>
            <person name="Cottarel G."/>
        </authorList>
    </citation>
    <scope>GENOME REANNOTATION</scope>
</reference>